<keyword id="KW-0014">AIDS</keyword>
<keyword id="KW-1032">Host cell membrane</keyword>
<keyword id="KW-1035">Host cytoplasm</keyword>
<keyword id="KW-1043">Host membrane</keyword>
<keyword id="KW-0945">Host-virus interaction</keyword>
<keyword id="KW-0472">Membrane</keyword>
<keyword id="KW-0479">Metal-binding</keyword>
<keyword id="KW-0597">Phosphoprotein</keyword>
<keyword id="KW-0694">RNA-binding</keyword>
<keyword id="KW-0832">Ubl conjugation</keyword>
<keyword id="KW-0833">Ubl conjugation pathway</keyword>
<keyword id="KW-0946">Virion</keyword>
<keyword id="KW-0862">Zinc</keyword>
<protein>
    <recommendedName>
        <fullName evidence="2">Virion infectivity factor</fullName>
        <shortName evidence="2">Vif</shortName>
    </recommendedName>
    <alternativeName>
        <fullName evidence="2">SOR protein</fullName>
    </alternativeName>
    <component>
        <recommendedName>
            <fullName evidence="2">p17</fullName>
        </recommendedName>
    </component>
    <component>
        <recommendedName>
            <fullName evidence="2">p7</fullName>
        </recommendedName>
    </component>
</protein>
<organismHost>
    <name type="scientific">Homo sapiens</name>
    <name type="common">Human</name>
    <dbReference type="NCBI Taxonomy" id="9606"/>
</organismHost>
<name>VIF_HV1B1</name>
<organism>
    <name type="scientific">Human immunodeficiency virus type 1 group M subtype B (isolate BH10)</name>
    <name type="common">HIV-1</name>
    <dbReference type="NCBI Taxonomy" id="11678"/>
    <lineage>
        <taxon>Viruses</taxon>
        <taxon>Riboviria</taxon>
        <taxon>Pararnavirae</taxon>
        <taxon>Artverviricota</taxon>
        <taxon>Revtraviricetes</taxon>
        <taxon>Ortervirales</taxon>
        <taxon>Retroviridae</taxon>
        <taxon>Orthoretrovirinae</taxon>
        <taxon>Lentivirus</taxon>
        <taxon>Human immunodeficiency virus type 1</taxon>
    </lineage>
</organism>
<gene>
    <name evidence="2" type="primary">vif</name>
</gene>
<accession>P69720</accession>
<accession>P03401</accession>
<accession>P69724</accession>
<proteinExistence type="inferred from homology"/>
<comment type="function">
    <text evidence="2">Counteracts the innate antiviral activity of host APOBEC3F and APOBEC3G by promoting their ubiquitination and degradation. Acts as a substrate recognition component of an E3 ubiquitin-protein ligase complex: mechanistically, Vif hijacks a host cullin-5-RING E3 ubiquitin-protein ligase complex (ECS complex) and the transcription coactivator CBFB/CBF-beta to form an active E3 ubiquitin-protein ligase complex that targets APOBEC3G and APOBEC3F for polyubiquitination, leading to their degradation by the proteasome. Vif interaction with APOBEC3G also blocks its cytidine deaminase activity in a proteasome-independent manner, suggesting a dual inhibitory mechanism. May interact directly with APOBEC3G mRNA in order to inhibit its translation. Association with CBFB/CBF-beta also inhibits the transcription coactivator activity of CBFB/CBF-beta. Seems to play a role in viral morphology by affecting the stability of the viral nucleoprotein core. Finally, Vif also contributes to the G2 cell cycle arrest observed in HIV infected cells.</text>
</comment>
<comment type="subunit">
    <text evidence="1">Homomultimer; in vitro and presumably in vivo. Interacts with viral RNA and Pr55Gag precursor; these interactions mediate Vif incorporation into the virion. Interacts with the viral reverse transcriptase. Forms cullin-5-RING E3 ubiquitin-protein ligase complex (ECS complex) by interacting with host CUL5, RBX2, elongin BC complex (ELOB and ELOC) and CBFB/CBF-beta. Within the ECS complex, Vif interacts directly with host CUL5, ELOC and APOBEC (APOBEC3F and APOBEC3G) substrates. The ECS complex also contains some single-stranded RNA (ssRNA) that acts as a glue that bridges Vif with APOBEC (APOBEC3F and APOBEC3G) substrates. Interacts with host UBCE7IP1 isoform 3/ZIN and possibly with SAT. Interacts with host tyrosine kinases HCK and FYN; these interactions may decrease level of phosphorylated APOBEC3G incorporation into virions. Interacts with host ABCE1; this interaction may play a role in protecting viral RNA from damage during viral assembly. Interacts with host MDM2; this interaction targets Vif for degradation by the proteasome.</text>
</comment>
<comment type="subcellular location">
    <subcellularLocation>
        <location evidence="2">Host cytoplasm</location>
    </subcellularLocation>
    <subcellularLocation>
        <location evidence="2">Host cell membrane</location>
        <topology evidence="2">Peripheral membrane protein</topology>
        <orientation evidence="2">Cytoplasmic side</orientation>
    </subcellularLocation>
    <subcellularLocation>
        <location evidence="2">Virion</location>
    </subcellularLocation>
    <text evidence="2">In the cytoplasm, seems to colocalize with intermediate filament vimentin. A fraction is associated with the cytoplasmic side of cellular membranes, presumably via the interaction with Pr55Gag precursor. Incorporated in virions at a ratio of approximately 7 to 20 molecules per virion.</text>
</comment>
<comment type="induction">
    <text evidence="2">Expressed late during infection in a Rev-dependent manner.</text>
</comment>
<comment type="domain">
    <text evidence="2">The BC-like-box motif mediates the interaction with elongin BC complex.</text>
</comment>
<comment type="domain">
    <text evidence="2">The HCCH motif (H-x(5)-C-x(18)-C-x(5)-H) mediates the interaction with CUL5.</text>
</comment>
<comment type="PTM">
    <text evidence="2">Processed in virion by the viral protease.</text>
</comment>
<comment type="PTM">
    <text evidence="2">Highly phosphorylated on serine and threonine residues.</text>
</comment>
<comment type="PTM">
    <text evidence="2">Polyubiquitinated and degraded by the proteasome in the presence of APOBEC3G.</text>
</comment>
<comment type="miscellaneous">
    <text evidence="2">Vif-defective viruses show catastrophic failure in reverse transcription due to APOBEC-induced mutations that initiate a DNA base repair pathway and compromise the structural integrity of the ssDNA. In the absence of Vif, the virion is morphologically abnormal.</text>
</comment>
<comment type="miscellaneous">
    <text evidence="2">HIV-1 lineages are divided in three main groups, M (for Major), O (for Outlier), and N (for New, or Non-M, Non-O). The vast majority of strains found worldwide belong to the group M. Group O seems to be endemic to and largely confined to Cameroon and neighboring countries in West Central Africa, where these viruses represent a small minority of HIV-1 strains. The group N is represented by a limited number of isolates from Cameroonian persons. The group M is further subdivided in 9 clades or subtypes (A to D, F to H, J and K).</text>
</comment>
<comment type="miscellaneous">
    <text evidence="2">Required for replication in 'nonpermissive' cells, including primary T-cells, macrophages and certain T-cell lines, but is dispensable for replication in 'permissive' cell lines, such as 293T cells. In nonpermissive cells, Vif-defective viruses can produce virions, but they fail to complete reverse transcription and cannot successfully infect new cells.</text>
</comment>
<comment type="similarity">
    <text evidence="2">Belongs to the primate lentivirus group Vif protein family.</text>
</comment>
<sequence length="192" mass="22513">MENRWQVMIVWQVDRMRIRTWKSLVKHHMYVSGKARGWFYRHHYESPHPRISSEVHIPLGDARLVITTYWGLHTGERDWHLGQGVSIEWRKKRYSTQVDPELADQLIHLYYFDCFSDSAIRKALLGHIVSPRCEYQAGHNKVGSLQYLALAALITPKKIKPPLPSVTKLTEDRWNKPQKTKGHRGSHTMNGH</sequence>
<feature type="chain" id="PRO_0000085312" description="Virion infectivity factor" evidence="2">
    <location>
        <begin position="1"/>
        <end position="192"/>
    </location>
</feature>
<feature type="chain" id="PRO_0000244708" description="p17" evidence="2">
    <location>
        <begin position="1"/>
        <end position="150"/>
    </location>
</feature>
<feature type="chain" id="PRO_0000244709" description="p7" evidence="2">
    <location>
        <begin position="151"/>
        <end position="192"/>
    </location>
</feature>
<feature type="region of interest" description="Interaction with host APOBEC3F; F1-box" evidence="2">
    <location>
        <begin position="14"/>
        <end position="17"/>
    </location>
</feature>
<feature type="region of interest" description="Interaction with host APOBEC3G; G-box" evidence="2">
    <location>
        <begin position="40"/>
        <end position="44"/>
    </location>
</feature>
<feature type="region of interest" description="Interaction with host APOBEC3F and APOBEC3G; FG-box" evidence="2">
    <location>
        <begin position="54"/>
        <end position="72"/>
    </location>
</feature>
<feature type="region of interest" description="Interaction with host APOBEC3F; F2-box" evidence="2">
    <location>
        <begin position="74"/>
        <end position="79"/>
    </location>
</feature>
<feature type="region of interest" description="RNA-binding" evidence="2">
    <location>
        <begin position="75"/>
        <end position="114"/>
    </location>
</feature>
<feature type="region of interest" description="SOCS box-like" evidence="2">
    <location>
        <begin position="151"/>
        <end position="180"/>
    </location>
</feature>
<feature type="region of interest" description="Multimerization" evidence="2">
    <location>
        <begin position="151"/>
        <end position="164"/>
    </location>
</feature>
<feature type="region of interest" description="Disordered" evidence="3">
    <location>
        <begin position="164"/>
        <end position="192"/>
    </location>
</feature>
<feature type="region of interest" description="Membrane association" evidence="2">
    <location>
        <begin position="171"/>
        <end position="172"/>
    </location>
</feature>
<feature type="short sequence motif" description="HCCH motif" evidence="2">
    <location>
        <begin position="108"/>
        <end position="139"/>
    </location>
</feature>
<feature type="short sequence motif" description="BC-box-like motif" evidence="2">
    <location>
        <begin position="144"/>
        <end position="153"/>
    </location>
</feature>
<feature type="compositionally biased region" description="Basic residues" evidence="3">
    <location>
        <begin position="176"/>
        <end position="186"/>
    </location>
</feature>
<feature type="binding site" evidence="2">
    <location>
        <position position="108"/>
    </location>
    <ligand>
        <name>Zn(2+)</name>
        <dbReference type="ChEBI" id="CHEBI:29105"/>
    </ligand>
</feature>
<feature type="binding site" evidence="2">
    <location>
        <position position="114"/>
    </location>
    <ligand>
        <name>Zn(2+)</name>
        <dbReference type="ChEBI" id="CHEBI:29105"/>
    </ligand>
</feature>
<feature type="binding site" evidence="2">
    <location>
        <position position="133"/>
    </location>
    <ligand>
        <name>Zn(2+)</name>
        <dbReference type="ChEBI" id="CHEBI:29105"/>
    </ligand>
</feature>
<feature type="binding site" evidence="2">
    <location>
        <position position="139"/>
    </location>
    <ligand>
        <name>Zn(2+)</name>
        <dbReference type="ChEBI" id="CHEBI:29105"/>
    </ligand>
</feature>
<feature type="site" description="Cleavage in virion (by viral protease)" evidence="2">
    <location>
        <begin position="150"/>
        <end position="151"/>
    </location>
</feature>
<feature type="modified residue" description="Phosphothreonine; by host MAP4K1" evidence="2">
    <location>
        <position position="96"/>
    </location>
</feature>
<feature type="modified residue" description="Phosphoserine; by host" evidence="2">
    <location>
        <position position="144"/>
    </location>
</feature>
<feature type="modified residue" description="Phosphothreonine; by host" evidence="2">
    <location>
        <position position="155"/>
    </location>
</feature>
<feature type="modified residue" description="Phosphoserine; by host MAP4K1" evidence="2">
    <location>
        <position position="165"/>
    </location>
</feature>
<feature type="modified residue" description="Phosphothreonine; by host" evidence="2">
    <location>
        <position position="188"/>
    </location>
</feature>
<dbReference type="EMBL" id="M15654">
    <property type="protein sequence ID" value="AAA44202.1"/>
    <property type="molecule type" value="Genomic_RNA"/>
</dbReference>
<dbReference type="EMBL" id="K02083">
    <property type="protein sequence ID" value="AAB59868.1"/>
    <property type="molecule type" value="Genomic_DNA"/>
</dbReference>
<dbReference type="EMBL" id="X01762">
    <property type="status" value="NOT_ANNOTATED_CDS"/>
    <property type="molecule type" value="Genomic_RNA"/>
</dbReference>
<dbReference type="RefSeq" id="NP_057851.1">
    <property type="nucleotide sequence ID" value="NC_001802.1"/>
</dbReference>
<dbReference type="SMR" id="P69720"/>
<dbReference type="BioGRID" id="1205539">
    <property type="interactions" value="64"/>
</dbReference>
<dbReference type="iPTMnet" id="P69720"/>
<dbReference type="GeneID" id="155459"/>
<dbReference type="KEGG" id="vg:155459"/>
<dbReference type="Proteomes" id="UP000007690">
    <property type="component" value="Genome"/>
</dbReference>
<dbReference type="Proteomes" id="UP000107234">
    <property type="component" value="Genome"/>
</dbReference>
<dbReference type="Proteomes" id="UP000126245">
    <property type="component" value="Genome"/>
</dbReference>
<dbReference type="GO" id="GO:0030430">
    <property type="term" value="C:host cell cytoplasm"/>
    <property type="evidence" value="ECO:0007669"/>
    <property type="project" value="UniProtKB-SubCell"/>
</dbReference>
<dbReference type="GO" id="GO:0020002">
    <property type="term" value="C:host cell plasma membrane"/>
    <property type="evidence" value="ECO:0007669"/>
    <property type="project" value="UniProtKB-SubCell"/>
</dbReference>
<dbReference type="GO" id="GO:0016020">
    <property type="term" value="C:membrane"/>
    <property type="evidence" value="ECO:0007669"/>
    <property type="project" value="UniProtKB-UniRule"/>
</dbReference>
<dbReference type="GO" id="GO:0044423">
    <property type="term" value="C:virion component"/>
    <property type="evidence" value="ECO:0007669"/>
    <property type="project" value="UniProtKB-UniRule"/>
</dbReference>
<dbReference type="GO" id="GO:0046872">
    <property type="term" value="F:metal ion binding"/>
    <property type="evidence" value="ECO:0007669"/>
    <property type="project" value="UniProtKB-KW"/>
</dbReference>
<dbReference type="GO" id="GO:0003723">
    <property type="term" value="F:RNA binding"/>
    <property type="evidence" value="ECO:0007669"/>
    <property type="project" value="UniProtKB-UniRule"/>
</dbReference>
<dbReference type="GO" id="GO:0019058">
    <property type="term" value="P:viral life cycle"/>
    <property type="evidence" value="ECO:0007669"/>
    <property type="project" value="InterPro"/>
</dbReference>
<dbReference type="HAMAP" id="MF_04081">
    <property type="entry name" value="HIV_VIF"/>
    <property type="match status" value="1"/>
</dbReference>
<dbReference type="InterPro" id="IPR000475">
    <property type="entry name" value="Vif"/>
</dbReference>
<dbReference type="Pfam" id="PF00559">
    <property type="entry name" value="Vif"/>
    <property type="match status" value="1"/>
</dbReference>
<dbReference type="PRINTS" id="PR00349">
    <property type="entry name" value="VIRIONINFFCT"/>
</dbReference>
<evidence type="ECO:0000250" key="1">
    <source>
        <dbReference type="UniProtKB" id="O70897"/>
    </source>
</evidence>
<evidence type="ECO:0000255" key="2">
    <source>
        <dbReference type="HAMAP-Rule" id="MF_04081"/>
    </source>
</evidence>
<evidence type="ECO:0000256" key="3">
    <source>
        <dbReference type="SAM" id="MobiDB-lite"/>
    </source>
</evidence>
<reference key="1">
    <citation type="journal article" date="1985" name="Nature">
        <title>Complete nucleotide sequence of the AIDS virus, HTLV-III.</title>
        <authorList>
            <person name="Ratner L."/>
            <person name="Haseltine W.A."/>
            <person name="Patarca R."/>
            <person name="Livak K.J."/>
            <person name="Starcich B.R."/>
            <person name="Josephs S.F."/>
            <person name="Doran E.R."/>
            <person name="Rafalski J.A."/>
            <person name="Whitehorn E.A."/>
            <person name="Baumeister K."/>
            <person name="Ivanoff L."/>
            <person name="Petteway S.R. Jr."/>
            <person name="Pearson M.L."/>
            <person name="Lautenberger J.A."/>
            <person name="Papas T.S."/>
            <person name="Ghrayeb J."/>
            <person name="Chang N.T."/>
            <person name="Gallo R.C."/>
            <person name="Wong-Staal F."/>
        </authorList>
    </citation>
    <scope>NUCLEOTIDE SEQUENCE [GENOMIC RNA]</scope>
</reference>
<reference key="2">
    <citation type="journal article" date="1985" name="Nature">
        <title>Nucleic acid structure and expression of the human AIDS/lymphadenopathy retrovirus.</title>
        <authorList>
            <person name="Muesing M.A."/>
            <person name="Smith D.H."/>
            <person name="Cabradilla C.D."/>
            <person name="Benton C.V."/>
            <person name="Lasky L.A."/>
            <person name="Capon D.J."/>
        </authorList>
    </citation>
    <scope>NUCLEOTIDE SEQUENCE [GENOMIC DNA]</scope>
    <source>
        <strain>Isolate PV22</strain>
    </source>
</reference>